<dbReference type="SMR" id="C0HK24"/>
<dbReference type="GO" id="GO:0030246">
    <property type="term" value="F:carbohydrate binding"/>
    <property type="evidence" value="ECO:0007669"/>
    <property type="project" value="UniProtKB-KW"/>
</dbReference>
<dbReference type="CDD" id="cd22827">
    <property type="entry name" value="Gal_Rha_Lectin_SUL-I-like"/>
    <property type="match status" value="1"/>
</dbReference>
<dbReference type="FunFam" id="2.60.120.740:FF:000001">
    <property type="entry name" value="Adhesion G protein-coupled receptor L2"/>
    <property type="match status" value="1"/>
</dbReference>
<dbReference type="Gene3D" id="2.60.120.740">
    <property type="match status" value="1"/>
</dbReference>
<dbReference type="InterPro" id="IPR000922">
    <property type="entry name" value="Lectin_gal-bd_dom"/>
</dbReference>
<dbReference type="InterPro" id="IPR043159">
    <property type="entry name" value="Lectin_gal-bd_sf"/>
</dbReference>
<dbReference type="PANTHER" id="PTHR46780">
    <property type="entry name" value="PROTEIN EVA-1"/>
    <property type="match status" value="1"/>
</dbReference>
<dbReference type="Pfam" id="PF02140">
    <property type="entry name" value="SUEL_Lectin"/>
    <property type="match status" value="1"/>
</dbReference>
<dbReference type="PROSITE" id="PS50228">
    <property type="entry name" value="SUEL_LECTIN"/>
    <property type="match status" value="1"/>
</dbReference>
<reference evidence="6" key="1">
    <citation type="journal article" date="2015" name="Int. J. Biol. Macromol.">
        <title>L-Rhamnose-binding lectin from eggs of the Echinometra lucunter: Amino acid sequence and molecular modeling.</title>
        <authorList>
            <person name="Carneiro R.F."/>
            <person name="Teixeira C.S."/>
            <person name="de Melo A.A."/>
            <person name="de Almeida A.S."/>
            <person name="Cavada B.S."/>
            <person name="de Sousa O.V."/>
            <person name="da Rocha B.A."/>
            <person name="Nagano C.S."/>
            <person name="Sampaio A.H."/>
        </authorList>
    </citation>
    <scope>PROTEIN SEQUENCE</scope>
    <scope>FUNCTION</scope>
    <scope>BIOPHYSICOCHEMICAL PROPERTIES</scope>
    <scope>SUBUNIT</scope>
    <scope>LACK OF GLYCOSYLATION</scope>
    <scope>MASS SPECTROMETRY</scope>
    <scope>IDENTIFICATION BY MASS SPECTROMETRY</scope>
    <source>
        <tissue evidence="5">Egg</tissue>
    </source>
</reference>
<reference key="2">
    <citation type="submission" date="2016-06" db="UniProtKB">
        <authorList>
            <person name="Carneiro R."/>
        </authorList>
    </citation>
    <scope>SEQUENCE REVISION</scope>
</reference>
<accession>C0HK24</accession>
<evidence type="ECO:0000250" key="1">
    <source>
        <dbReference type="UniProtKB" id="C0HK23"/>
    </source>
</evidence>
<evidence type="ECO:0000255" key="2">
    <source>
        <dbReference type="PROSITE-ProRule" id="PRU00260"/>
    </source>
</evidence>
<evidence type="ECO:0000269" key="3">
    <source>
    </source>
</evidence>
<evidence type="ECO:0000269" key="4">
    <source ref="2"/>
</evidence>
<evidence type="ECO:0000303" key="5">
    <source>
    </source>
</evidence>
<evidence type="ECO:0000305" key="6"/>
<sequence>ELVSQLCLKKERVCEGSSLTISCPQKGAGISIARAIYGRTKTQVCPSDGATSNVNCKASNALNVVRDLCRGKSSCTVEASNDVFGDPCMHTYKYLELSYDCSK</sequence>
<organism evidence="5">
    <name type="scientific">Echinometra lucunter</name>
    <name type="common">Rock-boring urchin</name>
    <dbReference type="NCBI Taxonomy" id="105361"/>
    <lineage>
        <taxon>Eukaryota</taxon>
        <taxon>Metazoa</taxon>
        <taxon>Echinodermata</taxon>
        <taxon>Eleutherozoa</taxon>
        <taxon>Echinozoa</taxon>
        <taxon>Echinoidea</taxon>
        <taxon>Euechinoidea</taxon>
        <taxon>Echinacea</taxon>
        <taxon>Camarodonta</taxon>
        <taxon>Echinidea</taxon>
        <taxon>Echinometridae</taxon>
        <taxon>Echinometra</taxon>
    </lineage>
</organism>
<keyword id="KW-0903">Direct protein sequencing</keyword>
<keyword id="KW-1015">Disulfide bond</keyword>
<keyword id="KW-0348">Hemagglutinin</keyword>
<keyword id="KW-0430">Lectin</keyword>
<protein>
    <recommendedName>
        <fullName evidence="5">L-rhamnose-binding lectin ELEL-1</fullName>
    </recommendedName>
</protein>
<comment type="function">
    <text evidence="3">Rhamnose-binding lectin. Also binds alpha-D-melibiose, alpha-D-lactose, beta-D-lactose, methyl-alpha-D-galactopyranoside, methyl-beta-D--galactopyranoside and D-galactose but not D-arabinose, L-fucose, D-glucose, D-mannose, D-maltose, D-sucrose, N-acetyl-D-galactosamine, N-acetyl-D-glucosamine, N-acetyl-D-mannosamine-D-xylose or by glycoproteins orosomucoid, thyroglobulin, ovomucoid and porcine stomach mucin. Shows cation-independent hemagglutinating activity against rabbit and human erythrocytes. Agglutinates cells of Gram-positive bacterial species S.aureus but not those of Gram-negative E.coli.</text>
</comment>
<comment type="biophysicochemical properties">
    <phDependence>
        <text evidence="3">Activity is stable between pH 4 and 7 but decreases at basic pH.</text>
    </phDependence>
    <temperatureDependence>
        <text evidence="3">Activity is stable up to 60 degrees Celsius, then decreases and is lost at 100 degrees Celsius.</text>
    </temperatureDependence>
</comment>
<comment type="subunit">
    <text evidence="3">Homodimer; disulfide-linked.</text>
</comment>
<comment type="PTM">
    <text evidence="3">Not glycosylated.</text>
</comment>
<comment type="mass spectrometry">
    <text>Homodimer.</text>
</comment>
<proteinExistence type="evidence at protein level"/>
<feature type="chain" id="PRO_0000437082" description="L-rhamnose-binding lectin ELEL-1" evidence="3 4">
    <location>
        <begin position="1"/>
        <end position="103"/>
    </location>
</feature>
<feature type="domain" description="SUEL-type lectin" evidence="2">
    <location>
        <begin position="13"/>
        <end position="102"/>
    </location>
</feature>
<feature type="disulfide bond" description="Interchain" evidence="5">
    <location>
        <position position="7"/>
    </location>
</feature>
<feature type="disulfide bond" evidence="1">
    <location>
        <begin position="14"/>
        <end position="45"/>
    </location>
</feature>
<feature type="disulfide bond" evidence="1">
    <location>
        <begin position="23"/>
        <end position="101"/>
    </location>
</feature>
<feature type="disulfide bond" evidence="5">
    <location>
        <begin position="56"/>
        <end position="88"/>
    </location>
</feature>
<feature type="disulfide bond" evidence="1">
    <location>
        <begin position="69"/>
        <end position="75"/>
    </location>
</feature>
<name>ELEL_ECHLU</name>